<reference key="1">
    <citation type="journal article" date="2002" name="J. Bacteriol.">
        <title>Whole-genome comparison of Mycobacterium tuberculosis clinical and laboratory strains.</title>
        <authorList>
            <person name="Fleischmann R.D."/>
            <person name="Alland D."/>
            <person name="Eisen J.A."/>
            <person name="Carpenter L."/>
            <person name="White O."/>
            <person name="Peterson J.D."/>
            <person name="DeBoy R.T."/>
            <person name="Dodson R.J."/>
            <person name="Gwinn M.L."/>
            <person name="Haft D.H."/>
            <person name="Hickey E.K."/>
            <person name="Kolonay J.F."/>
            <person name="Nelson W.C."/>
            <person name="Umayam L.A."/>
            <person name="Ermolaeva M.D."/>
            <person name="Salzberg S.L."/>
            <person name="Delcher A."/>
            <person name="Utterback T.R."/>
            <person name="Weidman J.F."/>
            <person name="Khouri H.M."/>
            <person name="Gill J."/>
            <person name="Mikula A."/>
            <person name="Bishai W."/>
            <person name="Jacobs W.R. Jr."/>
            <person name="Venter J.C."/>
            <person name="Fraser C.M."/>
        </authorList>
    </citation>
    <scope>NUCLEOTIDE SEQUENCE [LARGE SCALE GENOMIC DNA]</scope>
    <source>
        <strain>CDC 1551 / Oshkosh</strain>
    </source>
</reference>
<organism>
    <name type="scientific">Mycobacterium tuberculosis (strain CDC 1551 / Oshkosh)</name>
    <dbReference type="NCBI Taxonomy" id="83331"/>
    <lineage>
        <taxon>Bacteria</taxon>
        <taxon>Bacillati</taxon>
        <taxon>Actinomycetota</taxon>
        <taxon>Actinomycetes</taxon>
        <taxon>Mycobacteriales</taxon>
        <taxon>Mycobacteriaceae</taxon>
        <taxon>Mycobacterium</taxon>
        <taxon>Mycobacterium tuberculosis complex</taxon>
    </lineage>
</organism>
<feature type="initiator methionine" description="Removed" evidence="1">
    <location>
        <position position="1"/>
    </location>
</feature>
<feature type="chain" id="PRO_0000427250" description="GMP synthase [glutamine-hydrolyzing]">
    <location>
        <begin position="2"/>
        <end position="525"/>
    </location>
</feature>
<feature type="domain" description="Glutamine amidotransferase type-1">
    <location>
        <begin position="16"/>
        <end position="205"/>
    </location>
</feature>
<feature type="domain" description="GMPS ATP-PPase">
    <location>
        <begin position="206"/>
        <end position="399"/>
    </location>
</feature>
<feature type="active site" description="Nucleophile" evidence="1">
    <location>
        <position position="93"/>
    </location>
</feature>
<feature type="active site" evidence="1">
    <location>
        <position position="179"/>
    </location>
</feature>
<feature type="active site" evidence="1">
    <location>
        <position position="181"/>
    </location>
</feature>
<feature type="binding site" evidence="1">
    <location>
        <begin position="233"/>
        <end position="239"/>
    </location>
    <ligand>
        <name>ATP</name>
        <dbReference type="ChEBI" id="CHEBI:30616"/>
    </ligand>
</feature>
<keyword id="KW-0067">ATP-binding</keyword>
<keyword id="KW-0315">Glutamine amidotransferase</keyword>
<keyword id="KW-0332">GMP biosynthesis</keyword>
<keyword id="KW-0436">Ligase</keyword>
<keyword id="KW-0547">Nucleotide-binding</keyword>
<keyword id="KW-0658">Purine biosynthesis</keyword>
<keyword id="KW-1185">Reference proteome</keyword>
<proteinExistence type="inferred from homology"/>
<comment type="function">
    <text evidence="1">Catalyzes the synthesis of GMP from XMP.</text>
</comment>
<comment type="catalytic activity">
    <reaction>
        <text>XMP + L-glutamine + ATP + H2O = GMP + L-glutamate + AMP + diphosphate + 2 H(+)</text>
        <dbReference type="Rhea" id="RHEA:11680"/>
        <dbReference type="ChEBI" id="CHEBI:15377"/>
        <dbReference type="ChEBI" id="CHEBI:15378"/>
        <dbReference type="ChEBI" id="CHEBI:29985"/>
        <dbReference type="ChEBI" id="CHEBI:30616"/>
        <dbReference type="ChEBI" id="CHEBI:33019"/>
        <dbReference type="ChEBI" id="CHEBI:57464"/>
        <dbReference type="ChEBI" id="CHEBI:58115"/>
        <dbReference type="ChEBI" id="CHEBI:58359"/>
        <dbReference type="ChEBI" id="CHEBI:456215"/>
        <dbReference type="EC" id="6.3.5.2"/>
    </reaction>
</comment>
<comment type="pathway">
    <text>Purine metabolism; GMP biosynthesis; GMP from XMP (L-Gln route): step 1/1.</text>
</comment>
<comment type="subunit">
    <text evidence="1">Homodimer.</text>
</comment>
<protein>
    <recommendedName>
        <fullName>GMP synthase [glutamine-hydrolyzing]</fullName>
        <ecNumber>6.3.5.2</ecNumber>
    </recommendedName>
    <alternativeName>
        <fullName>GMP synthetase</fullName>
    </alternativeName>
    <alternativeName>
        <fullName>Glutamine amidotransferase</fullName>
    </alternativeName>
</protein>
<sequence length="525" mass="56046">MVQPADIDVPETPARPVLVVDFGAQYAQLIARRVREARVFSEVIPHTASIEEIRARQPVALVLSGGPASVYADGAPKLDPALLDLGVPVLGICYGFQAMAQALGGIVAHTGTREYGRTELKVLGGKLHSDLPEVQPVWMSHGDAVTAAPDGFDVVASSAGAPVAAFEAFDRRLAGVQYHPEVMHTPHGQQVLSRFLHDFAGLGAQWTPANIANALIEQVRTQIGDGHAICGLSGGVDSAVAAALVQRAIGDRLTCVFVDHGLLRAGERAQVQRDFVAATGANLVTVDAAETFLEALSGVSAPEGKRKIIGRQFIRAFEGAVRDVLDGKTAEFLVQGTLYPDVVESGGGSGTANIKSHHNVGGLPDDLKFTLVEPLRLLFKDEVRAVGRELGLPEEIVARQPFPGPGLGIRIVGEVTAKRVDTLRHADSIVREELTAAGLDNQIWQCPVVLLADVRSVGVQGDGRTYGHPIVLRPVSSEDAMTADWTRVPYEVLERISTRITNEVAEVNRVVLDITSKPPATIEWE</sequence>
<dbReference type="EC" id="6.3.5.2"/>
<dbReference type="EMBL" id="AE000516">
    <property type="protein sequence ID" value="AAK47841.1"/>
    <property type="molecule type" value="Genomic_DNA"/>
</dbReference>
<dbReference type="PIR" id="A70735">
    <property type="entry name" value="A70735"/>
</dbReference>
<dbReference type="RefSeq" id="WP_003900045.1">
    <property type="nucleotide sequence ID" value="NZ_KK341227.1"/>
</dbReference>
<dbReference type="SMR" id="P9WMS6"/>
<dbReference type="MEROPS" id="C26.A07"/>
<dbReference type="KEGG" id="mtc:MT3504"/>
<dbReference type="PATRIC" id="fig|83331.31.peg.3761"/>
<dbReference type="HOGENOM" id="CLU_014340_0_5_11"/>
<dbReference type="UniPathway" id="UPA00189">
    <property type="reaction ID" value="UER00296"/>
</dbReference>
<dbReference type="Proteomes" id="UP000001020">
    <property type="component" value="Chromosome"/>
</dbReference>
<dbReference type="GO" id="GO:0005829">
    <property type="term" value="C:cytosol"/>
    <property type="evidence" value="ECO:0007669"/>
    <property type="project" value="TreeGrafter"/>
</dbReference>
<dbReference type="GO" id="GO:0005524">
    <property type="term" value="F:ATP binding"/>
    <property type="evidence" value="ECO:0007669"/>
    <property type="project" value="UniProtKB-UniRule"/>
</dbReference>
<dbReference type="GO" id="GO:0003921">
    <property type="term" value="F:GMP synthase activity"/>
    <property type="evidence" value="ECO:0007669"/>
    <property type="project" value="InterPro"/>
</dbReference>
<dbReference type="CDD" id="cd01742">
    <property type="entry name" value="GATase1_GMP_Synthase"/>
    <property type="match status" value="1"/>
</dbReference>
<dbReference type="CDD" id="cd01997">
    <property type="entry name" value="GMP_synthase_C"/>
    <property type="match status" value="1"/>
</dbReference>
<dbReference type="FunFam" id="3.30.300.10:FF:000002">
    <property type="entry name" value="GMP synthase [glutamine-hydrolyzing]"/>
    <property type="match status" value="1"/>
</dbReference>
<dbReference type="FunFam" id="3.40.50.620:FF:000001">
    <property type="entry name" value="GMP synthase [glutamine-hydrolyzing]"/>
    <property type="match status" value="1"/>
</dbReference>
<dbReference type="FunFam" id="3.40.50.880:FF:000001">
    <property type="entry name" value="GMP synthase [glutamine-hydrolyzing]"/>
    <property type="match status" value="1"/>
</dbReference>
<dbReference type="Gene3D" id="3.30.300.10">
    <property type="match status" value="1"/>
</dbReference>
<dbReference type="Gene3D" id="3.40.50.880">
    <property type="match status" value="1"/>
</dbReference>
<dbReference type="Gene3D" id="3.40.50.620">
    <property type="entry name" value="HUPs"/>
    <property type="match status" value="1"/>
</dbReference>
<dbReference type="HAMAP" id="MF_00344">
    <property type="entry name" value="GMP_synthase"/>
    <property type="match status" value="1"/>
</dbReference>
<dbReference type="InterPro" id="IPR029062">
    <property type="entry name" value="Class_I_gatase-like"/>
</dbReference>
<dbReference type="InterPro" id="IPR017926">
    <property type="entry name" value="GATASE"/>
</dbReference>
<dbReference type="InterPro" id="IPR001674">
    <property type="entry name" value="GMP_synth_C"/>
</dbReference>
<dbReference type="InterPro" id="IPR004739">
    <property type="entry name" value="GMP_synth_GATase"/>
</dbReference>
<dbReference type="InterPro" id="IPR022955">
    <property type="entry name" value="GMP_synthase"/>
</dbReference>
<dbReference type="InterPro" id="IPR025777">
    <property type="entry name" value="GMPS_ATP_PPase_dom"/>
</dbReference>
<dbReference type="InterPro" id="IPR022310">
    <property type="entry name" value="NAD/GMP_synthase"/>
</dbReference>
<dbReference type="InterPro" id="IPR014729">
    <property type="entry name" value="Rossmann-like_a/b/a_fold"/>
</dbReference>
<dbReference type="NCBIfam" id="TIGR00884">
    <property type="entry name" value="guaA_Cterm"/>
    <property type="match status" value="1"/>
</dbReference>
<dbReference type="NCBIfam" id="TIGR00888">
    <property type="entry name" value="guaA_Nterm"/>
    <property type="match status" value="1"/>
</dbReference>
<dbReference type="NCBIfam" id="NF000848">
    <property type="entry name" value="PRK00074.1"/>
    <property type="match status" value="1"/>
</dbReference>
<dbReference type="PANTHER" id="PTHR11922:SF2">
    <property type="entry name" value="GMP SYNTHASE [GLUTAMINE-HYDROLYZING]"/>
    <property type="match status" value="1"/>
</dbReference>
<dbReference type="PANTHER" id="PTHR11922">
    <property type="entry name" value="GMP SYNTHASE-RELATED"/>
    <property type="match status" value="1"/>
</dbReference>
<dbReference type="Pfam" id="PF00117">
    <property type="entry name" value="GATase"/>
    <property type="match status" value="1"/>
</dbReference>
<dbReference type="Pfam" id="PF00958">
    <property type="entry name" value="GMP_synt_C"/>
    <property type="match status" value="1"/>
</dbReference>
<dbReference type="Pfam" id="PF02540">
    <property type="entry name" value="NAD_synthase"/>
    <property type="match status" value="1"/>
</dbReference>
<dbReference type="PRINTS" id="PR00097">
    <property type="entry name" value="ANTSNTHASEII"/>
</dbReference>
<dbReference type="PRINTS" id="PR00099">
    <property type="entry name" value="CPSGATASE"/>
</dbReference>
<dbReference type="PRINTS" id="PR00096">
    <property type="entry name" value="GATASE"/>
</dbReference>
<dbReference type="SUPFAM" id="SSF52402">
    <property type="entry name" value="Adenine nucleotide alpha hydrolases-like"/>
    <property type="match status" value="1"/>
</dbReference>
<dbReference type="SUPFAM" id="SSF52317">
    <property type="entry name" value="Class I glutamine amidotransferase-like"/>
    <property type="match status" value="1"/>
</dbReference>
<dbReference type="SUPFAM" id="SSF54810">
    <property type="entry name" value="GMP synthetase C-terminal dimerisation domain"/>
    <property type="match status" value="1"/>
</dbReference>
<dbReference type="PROSITE" id="PS51273">
    <property type="entry name" value="GATASE_TYPE_1"/>
    <property type="match status" value="1"/>
</dbReference>
<dbReference type="PROSITE" id="PS51553">
    <property type="entry name" value="GMPS_ATP_PPASE"/>
    <property type="match status" value="1"/>
</dbReference>
<accession>P9WMS6</accession>
<accession>L0TCE7</accession>
<accession>P0A5A1</accession>
<accession>Q50729</accession>
<evidence type="ECO:0000250" key="1"/>
<gene>
    <name type="primary">guaA</name>
    <name type="ordered locus">MT3504</name>
</gene>
<name>GUAA_MYCTO</name>